<protein>
    <recommendedName>
        <fullName>RNA polymerase II subunit A C-terminal domain phosphatase</fullName>
        <ecNumber>3.1.3.16</ecNumber>
    </recommendedName>
    <alternativeName>
        <fullName>TFIIF-associating CTD phosphatase</fullName>
    </alternativeName>
</protein>
<evidence type="ECO:0000250" key="1"/>
<evidence type="ECO:0000250" key="2">
    <source>
        <dbReference type="UniProtKB" id="Q9Y5B0"/>
    </source>
</evidence>
<evidence type="ECO:0000255" key="3">
    <source>
        <dbReference type="PROSITE-ProRule" id="PRU00033"/>
    </source>
</evidence>
<evidence type="ECO:0000255" key="4">
    <source>
        <dbReference type="PROSITE-ProRule" id="PRU00336"/>
    </source>
</evidence>
<evidence type="ECO:0000256" key="5">
    <source>
        <dbReference type="SAM" id="MobiDB-lite"/>
    </source>
</evidence>
<evidence type="ECO:0000303" key="6">
    <source>
    </source>
</evidence>
<evidence type="ECO:0000305" key="7"/>
<evidence type="ECO:0007744" key="8">
    <source>
    </source>
</evidence>
<evidence type="ECO:0007744" key="9">
    <source>
    </source>
</evidence>
<evidence type="ECO:0007744" key="10">
    <source>
    </source>
</evidence>
<organism>
    <name type="scientific">Mus musculus</name>
    <name type="common">Mouse</name>
    <dbReference type="NCBI Taxonomy" id="10090"/>
    <lineage>
        <taxon>Eukaryota</taxon>
        <taxon>Metazoa</taxon>
        <taxon>Chordata</taxon>
        <taxon>Craniata</taxon>
        <taxon>Vertebrata</taxon>
        <taxon>Euteleostomi</taxon>
        <taxon>Mammalia</taxon>
        <taxon>Eutheria</taxon>
        <taxon>Euarchontoglires</taxon>
        <taxon>Glires</taxon>
        <taxon>Rodentia</taxon>
        <taxon>Myomorpha</taxon>
        <taxon>Muroidea</taxon>
        <taxon>Muridae</taxon>
        <taxon>Murinae</taxon>
        <taxon>Mus</taxon>
        <taxon>Mus</taxon>
    </lineage>
</organism>
<keyword id="KW-0007">Acetylation</keyword>
<keyword id="KW-0025">Alternative splicing</keyword>
<keyword id="KW-0131">Cell cycle</keyword>
<keyword id="KW-0132">Cell division</keyword>
<keyword id="KW-0963">Cytoplasm</keyword>
<keyword id="KW-0206">Cytoskeleton</keyword>
<keyword id="KW-0378">Hydrolase</keyword>
<keyword id="KW-0498">Mitosis</keyword>
<keyword id="KW-0539">Nucleus</keyword>
<keyword id="KW-0597">Phosphoprotein</keyword>
<keyword id="KW-0904">Protein phosphatase</keyword>
<keyword id="KW-1185">Reference proteome</keyword>
<proteinExistence type="evidence at protein level"/>
<dbReference type="EC" id="3.1.3.16"/>
<dbReference type="EMBL" id="AK016213">
    <property type="protein sequence ID" value="BAB30150.1"/>
    <property type="molecule type" value="mRNA"/>
</dbReference>
<dbReference type="EMBL" id="BC052934">
    <property type="protein sequence ID" value="AAH52934.1"/>
    <property type="molecule type" value="mRNA"/>
</dbReference>
<dbReference type="EMBL" id="BC053435">
    <property type="protein sequence ID" value="AAH53435.1"/>
    <property type="molecule type" value="mRNA"/>
</dbReference>
<dbReference type="CCDS" id="CCDS29368.1">
    <molecule id="Q7TSG2-1"/>
</dbReference>
<dbReference type="RefSeq" id="NP_080571.2">
    <molecule id="Q7TSG2-1"/>
    <property type="nucleotide sequence ID" value="NM_026295.2"/>
</dbReference>
<dbReference type="SMR" id="Q7TSG2"/>
<dbReference type="BioGRID" id="212340">
    <property type="interactions" value="6"/>
</dbReference>
<dbReference type="FunCoup" id="Q7TSG2">
    <property type="interactions" value="2117"/>
</dbReference>
<dbReference type="STRING" id="10090.ENSMUSP00000038938"/>
<dbReference type="GlyGen" id="Q7TSG2">
    <property type="glycosylation" value="2 sites"/>
</dbReference>
<dbReference type="iPTMnet" id="Q7TSG2"/>
<dbReference type="PhosphoSitePlus" id="Q7TSG2"/>
<dbReference type="SwissPalm" id="Q7TSG2"/>
<dbReference type="jPOST" id="Q7TSG2"/>
<dbReference type="PaxDb" id="10090-ENSMUSP00000038938"/>
<dbReference type="ProteomicsDB" id="285214">
    <molecule id="Q7TSG2-1"/>
</dbReference>
<dbReference type="ProteomicsDB" id="285215">
    <molecule id="Q7TSG2-2"/>
</dbReference>
<dbReference type="Pumba" id="Q7TSG2"/>
<dbReference type="Antibodypedia" id="23481">
    <property type="antibodies" value="145 antibodies from 23 providers"/>
</dbReference>
<dbReference type="DNASU" id="67655"/>
<dbReference type="Ensembl" id="ENSMUST00000036229.13">
    <molecule id="Q7TSG2-1"/>
    <property type="protein sequence ID" value="ENSMUSP00000038938.7"/>
    <property type="gene ID" value="ENSMUSG00000033323.15"/>
</dbReference>
<dbReference type="GeneID" id="67655"/>
<dbReference type="KEGG" id="mmu:67655"/>
<dbReference type="UCSC" id="uc008ftb.1">
    <molecule id="Q7TSG2-1"/>
    <property type="organism name" value="mouse"/>
</dbReference>
<dbReference type="AGR" id="MGI:1926953"/>
<dbReference type="CTD" id="9150"/>
<dbReference type="MGI" id="MGI:1926953">
    <property type="gene designation" value="Ctdp1"/>
</dbReference>
<dbReference type="VEuPathDB" id="HostDB:ENSMUSG00000033323"/>
<dbReference type="eggNOG" id="KOG0323">
    <property type="taxonomic scope" value="Eukaryota"/>
</dbReference>
<dbReference type="GeneTree" id="ENSGT00390000015641"/>
<dbReference type="HOGENOM" id="CLU_007683_1_2_1"/>
<dbReference type="InParanoid" id="Q7TSG2"/>
<dbReference type="OMA" id="FMDTINP"/>
<dbReference type="OrthoDB" id="10249888at2759"/>
<dbReference type="PhylomeDB" id="Q7TSG2"/>
<dbReference type="TreeFam" id="TF315104"/>
<dbReference type="Reactome" id="R-MMU-112382">
    <property type="pathway name" value="Formation of RNA Pol II elongation complex"/>
</dbReference>
<dbReference type="Reactome" id="R-MMU-113418">
    <property type="pathway name" value="Formation of the Early Elongation Complex"/>
</dbReference>
<dbReference type="Reactome" id="R-MMU-674695">
    <property type="pathway name" value="RNA Polymerase II Pre-transcription Events"/>
</dbReference>
<dbReference type="Reactome" id="R-MMU-6796648">
    <property type="pathway name" value="TP53 Regulates Transcription of DNA Repair Genes"/>
</dbReference>
<dbReference type="Reactome" id="R-MMU-75955">
    <property type="pathway name" value="RNA Polymerase II Transcription Elongation"/>
</dbReference>
<dbReference type="BioGRID-ORCS" id="67655">
    <property type="hits" value="22 hits in 81 CRISPR screens"/>
</dbReference>
<dbReference type="ChiTaRS" id="Ctdp1">
    <property type="organism name" value="mouse"/>
</dbReference>
<dbReference type="PRO" id="PR:Q7TSG2"/>
<dbReference type="Proteomes" id="UP000000589">
    <property type="component" value="Chromosome 18"/>
</dbReference>
<dbReference type="RNAct" id="Q7TSG2">
    <property type="molecule type" value="protein"/>
</dbReference>
<dbReference type="Bgee" id="ENSMUSG00000033323">
    <property type="expression patterns" value="Expressed in cleaving embryo and 247 other cell types or tissues"/>
</dbReference>
<dbReference type="ExpressionAtlas" id="Q7TSG2">
    <property type="expression patterns" value="baseline and differential"/>
</dbReference>
<dbReference type="GO" id="GO:0005813">
    <property type="term" value="C:centrosome"/>
    <property type="evidence" value="ECO:0000250"/>
    <property type="project" value="UniProtKB"/>
</dbReference>
<dbReference type="GO" id="GO:0005737">
    <property type="term" value="C:cytoplasm"/>
    <property type="evidence" value="ECO:0007669"/>
    <property type="project" value="UniProtKB-KW"/>
</dbReference>
<dbReference type="GO" id="GO:0030496">
    <property type="term" value="C:midbody"/>
    <property type="evidence" value="ECO:0000250"/>
    <property type="project" value="UniProtKB"/>
</dbReference>
<dbReference type="GO" id="GO:0005654">
    <property type="term" value="C:nucleoplasm"/>
    <property type="evidence" value="ECO:0007669"/>
    <property type="project" value="Ensembl"/>
</dbReference>
<dbReference type="GO" id="GO:0032991">
    <property type="term" value="C:protein-containing complex"/>
    <property type="evidence" value="ECO:0007669"/>
    <property type="project" value="Ensembl"/>
</dbReference>
<dbReference type="GO" id="GO:0005819">
    <property type="term" value="C:spindle"/>
    <property type="evidence" value="ECO:0000250"/>
    <property type="project" value="UniProtKB"/>
</dbReference>
<dbReference type="GO" id="GO:0051233">
    <property type="term" value="C:spindle midzone"/>
    <property type="evidence" value="ECO:0000250"/>
    <property type="project" value="UniProtKB"/>
</dbReference>
<dbReference type="GO" id="GO:0000922">
    <property type="term" value="C:spindle pole"/>
    <property type="evidence" value="ECO:0000250"/>
    <property type="project" value="UniProtKB"/>
</dbReference>
<dbReference type="GO" id="GO:0008420">
    <property type="term" value="F:RNA polymerase II CTD heptapeptide repeat phosphatase activity"/>
    <property type="evidence" value="ECO:0007669"/>
    <property type="project" value="Ensembl"/>
</dbReference>
<dbReference type="GO" id="GO:0030957">
    <property type="term" value="F:Tat protein binding"/>
    <property type="evidence" value="ECO:0007669"/>
    <property type="project" value="Ensembl"/>
</dbReference>
<dbReference type="GO" id="GO:0001096">
    <property type="term" value="F:TFIIF-class transcription factor complex binding"/>
    <property type="evidence" value="ECO:0007669"/>
    <property type="project" value="Ensembl"/>
</dbReference>
<dbReference type="GO" id="GO:0051301">
    <property type="term" value="P:cell division"/>
    <property type="evidence" value="ECO:0007669"/>
    <property type="project" value="UniProtKB-KW"/>
</dbReference>
<dbReference type="GO" id="GO:0010458">
    <property type="term" value="P:exit from mitosis"/>
    <property type="evidence" value="ECO:0000250"/>
    <property type="project" value="UniProtKB"/>
</dbReference>
<dbReference type="GO" id="GO:0061052">
    <property type="term" value="P:negative regulation of cell growth involved in cardiac muscle cell development"/>
    <property type="evidence" value="ECO:0007669"/>
    <property type="project" value="Ensembl"/>
</dbReference>
<dbReference type="GO" id="GO:0043923">
    <property type="term" value="P:positive regulation by host of viral transcription"/>
    <property type="evidence" value="ECO:0007669"/>
    <property type="project" value="Ensembl"/>
</dbReference>
<dbReference type="GO" id="GO:0006470">
    <property type="term" value="P:protein dephosphorylation"/>
    <property type="evidence" value="ECO:0000250"/>
    <property type="project" value="UniProtKB"/>
</dbReference>
<dbReference type="CDD" id="cd06850">
    <property type="entry name" value="biotinyl_domain"/>
    <property type="match status" value="1"/>
</dbReference>
<dbReference type="CDD" id="cd17729">
    <property type="entry name" value="BRCT_CTDP1"/>
    <property type="match status" value="1"/>
</dbReference>
<dbReference type="CDD" id="cd07521">
    <property type="entry name" value="HAD_FCP1-like"/>
    <property type="match status" value="1"/>
</dbReference>
<dbReference type="FunFam" id="2.40.50.100:FF:000046">
    <property type="entry name" value="RNA polymerase II subunit A C-terminal domain phosphatase"/>
    <property type="match status" value="1"/>
</dbReference>
<dbReference type="FunFam" id="3.40.50.1000:FF:000040">
    <property type="entry name" value="RNA polymerase II subunit A C-terminal domain phosphatase"/>
    <property type="match status" value="1"/>
</dbReference>
<dbReference type="FunFam" id="3.40.50.10190:FF:000007">
    <property type="entry name" value="RNA polymerase II subunit A C-terminal domain phosphatase"/>
    <property type="match status" value="1"/>
</dbReference>
<dbReference type="Gene3D" id="2.40.50.100">
    <property type="match status" value="1"/>
</dbReference>
<dbReference type="Gene3D" id="3.40.50.10190">
    <property type="entry name" value="BRCT domain"/>
    <property type="match status" value="1"/>
</dbReference>
<dbReference type="Gene3D" id="3.40.50.1000">
    <property type="entry name" value="HAD superfamily/HAD-like"/>
    <property type="match status" value="1"/>
</dbReference>
<dbReference type="Gene3D" id="1.10.287.10">
    <property type="entry name" value="S15/NS1, RNA-binding"/>
    <property type="match status" value="1"/>
</dbReference>
<dbReference type="InterPro" id="IPR001357">
    <property type="entry name" value="BRCT_dom"/>
</dbReference>
<dbReference type="InterPro" id="IPR036420">
    <property type="entry name" value="BRCT_dom_sf"/>
</dbReference>
<dbReference type="InterPro" id="IPR039189">
    <property type="entry name" value="Fcp1"/>
</dbReference>
<dbReference type="InterPro" id="IPR015388">
    <property type="entry name" value="FCP1_C"/>
</dbReference>
<dbReference type="InterPro" id="IPR004274">
    <property type="entry name" value="FCP1_dom"/>
</dbReference>
<dbReference type="InterPro" id="IPR011947">
    <property type="entry name" value="FCP1_euk"/>
</dbReference>
<dbReference type="InterPro" id="IPR036412">
    <property type="entry name" value="HAD-like_sf"/>
</dbReference>
<dbReference type="InterPro" id="IPR023214">
    <property type="entry name" value="HAD_sf"/>
</dbReference>
<dbReference type="InterPro" id="IPR011053">
    <property type="entry name" value="Single_hybrid_motif"/>
</dbReference>
<dbReference type="NCBIfam" id="TIGR02250">
    <property type="entry name" value="FCP1_euk"/>
    <property type="match status" value="1"/>
</dbReference>
<dbReference type="PANTHER" id="PTHR23081">
    <property type="entry name" value="RNA POLYMERASE II CTD PHOSPHATASE"/>
    <property type="match status" value="1"/>
</dbReference>
<dbReference type="PANTHER" id="PTHR23081:SF36">
    <property type="entry name" value="RNA POLYMERASE II SUBUNIT A C-TERMINAL DOMAIN PHOSPHATASE"/>
    <property type="match status" value="1"/>
</dbReference>
<dbReference type="Pfam" id="PF00533">
    <property type="entry name" value="BRCT"/>
    <property type="match status" value="1"/>
</dbReference>
<dbReference type="Pfam" id="PF09309">
    <property type="entry name" value="FCP1_C"/>
    <property type="match status" value="1"/>
</dbReference>
<dbReference type="Pfam" id="PF03031">
    <property type="entry name" value="NIF"/>
    <property type="match status" value="1"/>
</dbReference>
<dbReference type="SMART" id="SM00292">
    <property type="entry name" value="BRCT"/>
    <property type="match status" value="1"/>
</dbReference>
<dbReference type="SMART" id="SM00577">
    <property type="entry name" value="CPDc"/>
    <property type="match status" value="1"/>
</dbReference>
<dbReference type="SUPFAM" id="SSF52113">
    <property type="entry name" value="BRCT domain"/>
    <property type="match status" value="1"/>
</dbReference>
<dbReference type="SUPFAM" id="SSF56784">
    <property type="entry name" value="HAD-like"/>
    <property type="match status" value="1"/>
</dbReference>
<dbReference type="SUPFAM" id="SSF51230">
    <property type="entry name" value="Single hybrid motif"/>
    <property type="match status" value="1"/>
</dbReference>
<dbReference type="PROSITE" id="PS50172">
    <property type="entry name" value="BRCT"/>
    <property type="match status" value="1"/>
</dbReference>
<dbReference type="PROSITE" id="PS50969">
    <property type="entry name" value="FCP1"/>
    <property type="match status" value="1"/>
</dbReference>
<sequence>MEAPPAAGVPTECTPAVAGAEVRCPGPTPLRLLEWKVAAGATVRIGSVLAVCETAASAQPAGPAPARAASGGCVRAARTERRLRSERAGVVRELCAQPGQVVAPGALLVRLEGCSHPVVMKGLCAECGQDLTQLQSKNGRQQVPLSTATVSMVHSVPELMVSSEQAEKLGREDQQRLHRNRKLVLMVDLDQTLIHTTEQHCPQMSNKGIFHFQLGRGEPMLHTRLRPHCKDFLEKIAKLYELHVFTFGSRLYAHTIAGFLDPEKKLFSHRILSRDECIDPFSKTGNLRNLFPCGDSMVCIIDDREDVWKFAPNLITVKKYVYFPGTGDVNAPPAARETQARRKVNHSSKGGDALEQALSVRDPEDGRPAPGVEHSNGLGKASRELNGGEAVPGVFPSKADEKEAWPLTRASPASSSSGHEPTEAPELPVSCEWDGRTTPGVQPTQGDAATQDLDFDLSSDSESSESSSRSEGQRAPAPQERTKAAPEHSGPQDTSGGRAAASPLGESGPSIHPHDKGSDLDTQEEGERDSLCGLGNGSVDRKEAETESQNSEQSGVTAGESLDQSVGEEEEEDTDDDDHLIHLEEILVRVHTDYYTKYDRYLNKELEEAPDIRKIVPELKSKVLADVAVIFSGLHPTNFPVEKTREHYHATALGAKVLTQLVLSPDAPDRATHLIAARAGTEKVRQAQECKHLHVVSPDWLWSCLERWDKVEEQLFPLIDDDTRTHRDNSPAVFPDRHSVLPTALFHPTPIHSKAHPGPEVRIYDSNTGKLIRMGPQGSAPAPSSAPLNHGEPSSFRAVQPHQQQMFGEELPESQDGEQPGPARRKRQPSMSEAMPLYTLCKEDLESMDKEVDDILGEGSDDSDIEKKKPEDQDNEQERAPKPRKPRAPGIRREQPVGLPSSGERSTPGMRGPRGHKRKLNEEDAASESSGESSNDDEEGSSSEADEMAAALEAELNDLM</sequence>
<reference key="1">
    <citation type="journal article" date="2005" name="Science">
        <title>The transcriptional landscape of the mammalian genome.</title>
        <authorList>
            <person name="Carninci P."/>
            <person name="Kasukawa T."/>
            <person name="Katayama S."/>
            <person name="Gough J."/>
            <person name="Frith M.C."/>
            <person name="Maeda N."/>
            <person name="Oyama R."/>
            <person name="Ravasi T."/>
            <person name="Lenhard B."/>
            <person name="Wells C."/>
            <person name="Kodzius R."/>
            <person name="Shimokawa K."/>
            <person name="Bajic V.B."/>
            <person name="Brenner S.E."/>
            <person name="Batalov S."/>
            <person name="Forrest A.R."/>
            <person name="Zavolan M."/>
            <person name="Davis M.J."/>
            <person name="Wilming L.G."/>
            <person name="Aidinis V."/>
            <person name="Allen J.E."/>
            <person name="Ambesi-Impiombato A."/>
            <person name="Apweiler R."/>
            <person name="Aturaliya R.N."/>
            <person name="Bailey T.L."/>
            <person name="Bansal M."/>
            <person name="Baxter L."/>
            <person name="Beisel K.W."/>
            <person name="Bersano T."/>
            <person name="Bono H."/>
            <person name="Chalk A.M."/>
            <person name="Chiu K.P."/>
            <person name="Choudhary V."/>
            <person name="Christoffels A."/>
            <person name="Clutterbuck D.R."/>
            <person name="Crowe M.L."/>
            <person name="Dalla E."/>
            <person name="Dalrymple B.P."/>
            <person name="de Bono B."/>
            <person name="Della Gatta G."/>
            <person name="di Bernardo D."/>
            <person name="Down T."/>
            <person name="Engstrom P."/>
            <person name="Fagiolini M."/>
            <person name="Faulkner G."/>
            <person name="Fletcher C.F."/>
            <person name="Fukushima T."/>
            <person name="Furuno M."/>
            <person name="Futaki S."/>
            <person name="Gariboldi M."/>
            <person name="Georgii-Hemming P."/>
            <person name="Gingeras T.R."/>
            <person name="Gojobori T."/>
            <person name="Green R.E."/>
            <person name="Gustincich S."/>
            <person name="Harbers M."/>
            <person name="Hayashi Y."/>
            <person name="Hensch T.K."/>
            <person name="Hirokawa N."/>
            <person name="Hill D."/>
            <person name="Huminiecki L."/>
            <person name="Iacono M."/>
            <person name="Ikeo K."/>
            <person name="Iwama A."/>
            <person name="Ishikawa T."/>
            <person name="Jakt M."/>
            <person name="Kanapin A."/>
            <person name="Katoh M."/>
            <person name="Kawasawa Y."/>
            <person name="Kelso J."/>
            <person name="Kitamura H."/>
            <person name="Kitano H."/>
            <person name="Kollias G."/>
            <person name="Krishnan S.P."/>
            <person name="Kruger A."/>
            <person name="Kummerfeld S.K."/>
            <person name="Kurochkin I.V."/>
            <person name="Lareau L.F."/>
            <person name="Lazarevic D."/>
            <person name="Lipovich L."/>
            <person name="Liu J."/>
            <person name="Liuni S."/>
            <person name="McWilliam S."/>
            <person name="Madan Babu M."/>
            <person name="Madera M."/>
            <person name="Marchionni L."/>
            <person name="Matsuda H."/>
            <person name="Matsuzawa S."/>
            <person name="Miki H."/>
            <person name="Mignone F."/>
            <person name="Miyake S."/>
            <person name="Morris K."/>
            <person name="Mottagui-Tabar S."/>
            <person name="Mulder N."/>
            <person name="Nakano N."/>
            <person name="Nakauchi H."/>
            <person name="Ng P."/>
            <person name="Nilsson R."/>
            <person name="Nishiguchi S."/>
            <person name="Nishikawa S."/>
            <person name="Nori F."/>
            <person name="Ohara O."/>
            <person name="Okazaki Y."/>
            <person name="Orlando V."/>
            <person name="Pang K.C."/>
            <person name="Pavan W.J."/>
            <person name="Pavesi G."/>
            <person name="Pesole G."/>
            <person name="Petrovsky N."/>
            <person name="Piazza S."/>
            <person name="Reed J."/>
            <person name="Reid J.F."/>
            <person name="Ring B.Z."/>
            <person name="Ringwald M."/>
            <person name="Rost B."/>
            <person name="Ruan Y."/>
            <person name="Salzberg S.L."/>
            <person name="Sandelin A."/>
            <person name="Schneider C."/>
            <person name="Schoenbach C."/>
            <person name="Sekiguchi K."/>
            <person name="Semple C.A."/>
            <person name="Seno S."/>
            <person name="Sessa L."/>
            <person name="Sheng Y."/>
            <person name="Shibata Y."/>
            <person name="Shimada H."/>
            <person name="Shimada K."/>
            <person name="Silva D."/>
            <person name="Sinclair B."/>
            <person name="Sperling S."/>
            <person name="Stupka E."/>
            <person name="Sugiura K."/>
            <person name="Sultana R."/>
            <person name="Takenaka Y."/>
            <person name="Taki K."/>
            <person name="Tammoja K."/>
            <person name="Tan S.L."/>
            <person name="Tang S."/>
            <person name="Taylor M.S."/>
            <person name="Tegner J."/>
            <person name="Teichmann S.A."/>
            <person name="Ueda H.R."/>
            <person name="van Nimwegen E."/>
            <person name="Verardo R."/>
            <person name="Wei C.L."/>
            <person name="Yagi K."/>
            <person name="Yamanishi H."/>
            <person name="Zabarovsky E."/>
            <person name="Zhu S."/>
            <person name="Zimmer A."/>
            <person name="Hide W."/>
            <person name="Bult C."/>
            <person name="Grimmond S.M."/>
            <person name="Teasdale R.D."/>
            <person name="Liu E.T."/>
            <person name="Brusic V."/>
            <person name="Quackenbush J."/>
            <person name="Wahlestedt C."/>
            <person name="Mattick J.S."/>
            <person name="Hume D.A."/>
            <person name="Kai C."/>
            <person name="Sasaki D."/>
            <person name="Tomaru Y."/>
            <person name="Fukuda S."/>
            <person name="Kanamori-Katayama M."/>
            <person name="Suzuki M."/>
            <person name="Aoki J."/>
            <person name="Arakawa T."/>
            <person name="Iida J."/>
            <person name="Imamura K."/>
            <person name="Itoh M."/>
            <person name="Kato T."/>
            <person name="Kawaji H."/>
            <person name="Kawagashira N."/>
            <person name="Kawashima T."/>
            <person name="Kojima M."/>
            <person name="Kondo S."/>
            <person name="Konno H."/>
            <person name="Nakano K."/>
            <person name="Ninomiya N."/>
            <person name="Nishio T."/>
            <person name="Okada M."/>
            <person name="Plessy C."/>
            <person name="Shibata K."/>
            <person name="Shiraki T."/>
            <person name="Suzuki S."/>
            <person name="Tagami M."/>
            <person name="Waki K."/>
            <person name="Watahiki A."/>
            <person name="Okamura-Oho Y."/>
            <person name="Suzuki H."/>
            <person name="Kawai J."/>
            <person name="Hayashizaki Y."/>
        </authorList>
    </citation>
    <scope>NUCLEOTIDE SEQUENCE [LARGE SCALE MRNA] (ISOFORM 2)</scope>
    <source>
        <strain>C57BL/6J</strain>
        <tissue>Testis</tissue>
    </source>
</reference>
<reference key="2">
    <citation type="journal article" date="2004" name="Genome Res.">
        <title>The status, quality, and expansion of the NIH full-length cDNA project: the Mammalian Gene Collection (MGC).</title>
        <authorList>
            <consortium name="The MGC Project Team"/>
        </authorList>
    </citation>
    <scope>NUCLEOTIDE SEQUENCE [LARGE SCALE MRNA] (ISOFORM 1)</scope>
    <source>
        <tissue>Embryo</tissue>
        <tissue>Lung</tissue>
    </source>
</reference>
<reference key="3">
    <citation type="journal article" date="2007" name="Proc. Natl. Acad. Sci. U.S.A.">
        <title>Large-scale phosphorylation analysis of mouse liver.</title>
        <authorList>
            <person name="Villen J."/>
            <person name="Beausoleil S.A."/>
            <person name="Gerber S.A."/>
            <person name="Gygi S.P."/>
        </authorList>
    </citation>
    <scope>PHOSPHORYLATION [LARGE SCALE ANALYSIS] AT SER-730</scope>
    <scope>IDENTIFICATION BY MASS SPECTROMETRY [LARGE SCALE ANALYSIS]</scope>
    <source>
        <tissue>Liver</tissue>
    </source>
</reference>
<reference key="4">
    <citation type="journal article" date="2010" name="Cell">
        <title>A tissue-specific atlas of mouse protein phosphorylation and expression.</title>
        <authorList>
            <person name="Huttlin E.L."/>
            <person name="Jedrychowski M.P."/>
            <person name="Elias J.E."/>
            <person name="Goswami T."/>
            <person name="Rad R."/>
            <person name="Beausoleil S.A."/>
            <person name="Villen J."/>
            <person name="Haas W."/>
            <person name="Sowa M.E."/>
            <person name="Gygi S.P."/>
        </authorList>
    </citation>
    <scope>PHOSPHORYLATION [LARGE SCALE ANALYSIS] AT SER-530; SER-830; SER-860 AND SER-863</scope>
    <scope>IDENTIFICATION BY MASS SPECTROMETRY [LARGE SCALE ANALYSIS]</scope>
    <source>
        <tissue>Brain</tissue>
        <tissue>Heart</tissue>
        <tissue>Kidney</tissue>
        <tissue>Liver</tissue>
        <tissue>Lung</tissue>
        <tissue>Pancreas</tissue>
        <tissue>Spleen</tissue>
        <tissue>Testis</tissue>
    </source>
</reference>
<reference key="5">
    <citation type="journal article" date="2013" name="Mol. Cell">
        <title>SIRT5-mediated lysine desuccinylation impacts diverse metabolic pathways.</title>
        <authorList>
            <person name="Park J."/>
            <person name="Chen Y."/>
            <person name="Tishkoff D.X."/>
            <person name="Peng C."/>
            <person name="Tan M."/>
            <person name="Dai L."/>
            <person name="Xie Z."/>
            <person name="Zhang Y."/>
            <person name="Zwaans B.M."/>
            <person name="Skinner M.E."/>
            <person name="Lombard D.B."/>
            <person name="Zhao Y."/>
        </authorList>
    </citation>
    <scope>ACETYLATION [LARGE SCALE ANALYSIS] AT LYS-770</scope>
    <scope>IDENTIFICATION BY MASS SPECTROMETRY [LARGE SCALE ANALYSIS]</scope>
    <source>
        <tissue>Embryonic fibroblast</tissue>
    </source>
</reference>
<gene>
    <name type="primary">Ctdp1</name>
    <name type="synonym">Fcp1</name>
</gene>
<feature type="chain" id="PRO_0000212565" description="RNA polymerase II subunit A C-terminal domain phosphatase">
    <location>
        <begin position="1"/>
        <end position="960"/>
    </location>
</feature>
<feature type="domain" description="FCP1 homology" evidence="4">
    <location>
        <begin position="178"/>
        <end position="341"/>
    </location>
</feature>
<feature type="domain" description="BRCT" evidence="3">
    <location>
        <begin position="619"/>
        <end position="718"/>
    </location>
</feature>
<feature type="region of interest" description="Disordered" evidence="5">
    <location>
        <begin position="331"/>
        <end position="580"/>
    </location>
</feature>
<feature type="region of interest" description="Disordered" evidence="5">
    <location>
        <begin position="770"/>
        <end position="834"/>
    </location>
</feature>
<feature type="region of interest" description="Disordered" evidence="5">
    <location>
        <begin position="854"/>
        <end position="948"/>
    </location>
</feature>
<feature type="compositionally biased region" description="Polar residues" evidence="5">
    <location>
        <begin position="439"/>
        <end position="448"/>
    </location>
</feature>
<feature type="compositionally biased region" description="Acidic residues" evidence="5">
    <location>
        <begin position="453"/>
        <end position="463"/>
    </location>
</feature>
<feature type="compositionally biased region" description="Polar residues" evidence="5">
    <location>
        <begin position="547"/>
        <end position="556"/>
    </location>
</feature>
<feature type="compositionally biased region" description="Acidic residues" evidence="5">
    <location>
        <begin position="566"/>
        <end position="578"/>
    </location>
</feature>
<feature type="compositionally biased region" description="Acidic residues" evidence="5">
    <location>
        <begin position="854"/>
        <end position="864"/>
    </location>
</feature>
<feature type="compositionally biased region" description="Basic and acidic residues" evidence="5">
    <location>
        <begin position="865"/>
        <end position="881"/>
    </location>
</feature>
<feature type="compositionally biased region" description="Acidic residues" evidence="5">
    <location>
        <begin position="934"/>
        <end position="947"/>
    </location>
</feature>
<feature type="modified residue" description="N-acetylmethionine" evidence="2">
    <location>
        <position position="1"/>
    </location>
</feature>
<feature type="modified residue" description="Phosphoserine" evidence="9">
    <location>
        <position position="530"/>
    </location>
</feature>
<feature type="modified residue" description="Phosphoserine" evidence="2">
    <location>
        <position position="664"/>
    </location>
</feature>
<feature type="modified residue" description="Phosphoserine" evidence="8">
    <location>
        <position position="730"/>
    </location>
</feature>
<feature type="modified residue" description="N6-acetyllysine" evidence="10">
    <location>
        <position position="770"/>
    </location>
</feature>
<feature type="modified residue" description="Phosphoserine" evidence="9">
    <location>
        <position position="830"/>
    </location>
</feature>
<feature type="modified residue" description="Phosphoserine" evidence="9">
    <location>
        <position position="860"/>
    </location>
</feature>
<feature type="modified residue" description="Phosphoserine" evidence="9">
    <location>
        <position position="863"/>
    </location>
</feature>
<feature type="splice variant" id="VSP_009866" description="In isoform 2." evidence="6">
    <location>
        <begin position="1"/>
        <end position="788"/>
    </location>
</feature>
<feature type="splice variant" id="VSP_009867" description="In isoform 2." evidence="6">
    <original>NHGEPSSF</original>
    <variation>MSRIILVV</variation>
    <location>
        <begin position="789"/>
        <end position="796"/>
    </location>
</feature>
<feature type="sequence conflict" description="In Ref. 2; AAH52934." evidence="7" ref="2">
    <original>PEV</original>
    <variation>GTR</variation>
    <location>
        <begin position="759"/>
        <end position="761"/>
    </location>
</feature>
<feature type="sequence conflict" description="In Ref. 2; AAH52934." evidence="7" ref="2">
    <original>V</original>
    <variation>I</variation>
    <location>
        <position position="897"/>
    </location>
</feature>
<name>CTDP1_MOUSE</name>
<comment type="function">
    <text evidence="1">Processively dephosphorylates 'Ser-2' and 'Ser-5' of the heptad repeats YSPTSPS in the C-terminal domain of the largest RNA polymerase II subunit. This promotes the activity of RNA polymerase II. Plays a role in the exit from mitosis by dephosphorylating crucial mitotic substrates (USP44, CDC20 and WEE1) that are required for M-phase-promoting factor (MPF)/CDK1 inactivation (By similarity).</text>
</comment>
<comment type="catalytic activity">
    <reaction>
        <text>O-phospho-L-seryl-[protein] + H2O = L-seryl-[protein] + phosphate</text>
        <dbReference type="Rhea" id="RHEA:20629"/>
        <dbReference type="Rhea" id="RHEA-COMP:9863"/>
        <dbReference type="Rhea" id="RHEA-COMP:11604"/>
        <dbReference type="ChEBI" id="CHEBI:15377"/>
        <dbReference type="ChEBI" id="CHEBI:29999"/>
        <dbReference type="ChEBI" id="CHEBI:43474"/>
        <dbReference type="ChEBI" id="CHEBI:83421"/>
        <dbReference type="EC" id="3.1.3.16"/>
    </reaction>
</comment>
<comment type="catalytic activity">
    <reaction>
        <text>O-phospho-L-threonyl-[protein] + H2O = L-threonyl-[protein] + phosphate</text>
        <dbReference type="Rhea" id="RHEA:47004"/>
        <dbReference type="Rhea" id="RHEA-COMP:11060"/>
        <dbReference type="Rhea" id="RHEA-COMP:11605"/>
        <dbReference type="ChEBI" id="CHEBI:15377"/>
        <dbReference type="ChEBI" id="CHEBI:30013"/>
        <dbReference type="ChEBI" id="CHEBI:43474"/>
        <dbReference type="ChEBI" id="CHEBI:61977"/>
        <dbReference type="EC" id="3.1.3.16"/>
    </reaction>
</comment>
<comment type="subunit">
    <text evidence="1">Homodimer. Interacts with GTF2F1 (By similarity). Interacts with WDR77, SNRPB and SNRNP70 (By similarity).</text>
</comment>
<comment type="subcellular location">
    <subcellularLocation>
        <location evidence="1">Nucleus</location>
    </subcellularLocation>
    <subcellularLocation>
        <location evidence="1">Cytoplasm</location>
        <location evidence="1">Cytoskeleton</location>
        <location evidence="1">Microtubule organizing center</location>
        <location evidence="1">Centrosome</location>
    </subcellularLocation>
    <subcellularLocation>
        <location evidence="1">Cytoplasm</location>
        <location evidence="1">Cytoskeleton</location>
        <location evidence="1">Spindle</location>
    </subcellularLocation>
    <subcellularLocation>
        <location evidence="1">Cytoplasm</location>
        <location evidence="1">Cytoskeleton</location>
        <location evidence="1">Spindle pole</location>
    </subcellularLocation>
    <subcellularLocation>
        <location evidence="1">Midbody</location>
    </subcellularLocation>
    <text evidence="1">Found at centrosomes in prometaphase, at spindle and spindle poles in metaphase and at spindle midzone and midbody in anaphase and telophase-G1 respectively.</text>
</comment>
<comment type="alternative products">
    <event type="alternative splicing"/>
    <isoform>
        <id>Q7TSG2-1</id>
        <name>1</name>
        <sequence type="displayed"/>
    </isoform>
    <isoform>
        <id>Q7TSG2-2</id>
        <name>2</name>
        <sequence type="described" ref="VSP_009866 VSP_009867"/>
    </isoform>
</comment>
<comment type="PTM">
    <text evidence="1">Phosphorylated. In the presence of TFIIF, the phosphorylated form has an increased CTD phosphatase activity. The phosphorylation is required for the physical interaction with GTF2F1 (By similarity).</text>
</comment>
<accession>Q7TSG2</accession>
<accession>Q7TSS7</accession>
<accession>Q9D4S8</accession>